<comment type="function">
    <text evidence="4 5 6 7 10">Component of the large ribosomal subunit (PubMed:12962325, PubMed:23636399, PubMed:25901680, PubMed:25957688, PubMed:32669547). The ribosome is a large ribonucleoprotein complex responsible for the synthesis of proteins in the cell (PubMed:12962325, PubMed:23636399, PubMed:25901680, PubMed:25957688, PubMed:32669547).</text>
</comment>
<comment type="subunit">
    <text evidence="4 5 6 7 10">Component of the large ribosomal subunit (PubMed:12962325, PubMed:23636399, PubMed:25901680, PubMed:25957688, PubMed:32669547).</text>
</comment>
<comment type="interaction">
    <interactant intactId="EBI-1051893">
        <id>P49207</id>
    </interactant>
    <interactant intactId="EBI-5323863">
        <id>Q5S007</id>
        <label>LRRK2</label>
    </interactant>
    <organismsDiffer>false</organismsDiffer>
    <experiments>3</experiments>
</comment>
<comment type="interaction">
    <interactant intactId="EBI-1051893">
        <id>P49207</id>
    </interactant>
    <interactant intactId="EBI-78579">
        <id>P06748</id>
        <label>NPM1</label>
    </interactant>
    <organismsDiffer>false</organismsDiffer>
    <experiments>2</experiments>
</comment>
<comment type="subcellular location">
    <subcellularLocation>
        <location evidence="6">Cytoplasm</location>
        <location evidence="6">Cytosol</location>
    </subcellularLocation>
    <subcellularLocation>
        <location evidence="11 12">Cytoplasm</location>
    </subcellularLocation>
    <subcellularLocation>
        <location evidence="1">Endoplasmic reticulum</location>
    </subcellularLocation>
    <text evidence="1 6">Detected on cytosolic polysomes (PubMed:25957688). Detected in ribosomes that are associated with the rough endoplasmic reticulum (By similarity).</text>
</comment>
<comment type="similarity">
    <text evidence="9">Belongs to the eukaryotic ribosomal protein eL34 family.</text>
</comment>
<protein>
    <recommendedName>
        <fullName evidence="8">Large ribosomal subunit protein eL34</fullName>
    </recommendedName>
    <alternativeName>
        <fullName>60S ribosomal protein L34</fullName>
    </alternativeName>
</protein>
<sequence>MVQRLTYRRRLSYNTASNKTRLSRTPGNRIVYLYTKKVGKAPKSACGVCPGRLRGVRAVRPKVLMRLSKTKKHVSRAYGGSMCAKCVRDRIKRAFLIEEQKIVVKVLKAQAQSQKAK</sequence>
<dbReference type="EMBL" id="L38941">
    <property type="protein sequence ID" value="AAC41916.1"/>
    <property type="molecule type" value="mRNA"/>
</dbReference>
<dbReference type="EMBL" id="AB061832">
    <property type="protein sequence ID" value="BAB79470.1"/>
    <property type="molecule type" value="Genomic_DNA"/>
</dbReference>
<dbReference type="EMBL" id="CR542232">
    <property type="protein sequence ID" value="CAG47028.1"/>
    <property type="molecule type" value="mRNA"/>
</dbReference>
<dbReference type="EMBL" id="CR542242">
    <property type="protein sequence ID" value="CAG47038.1"/>
    <property type="molecule type" value="mRNA"/>
</dbReference>
<dbReference type="EMBL" id="BC001773">
    <property type="protein sequence ID" value="AAH01773.1"/>
    <property type="molecule type" value="mRNA"/>
</dbReference>
<dbReference type="EMBL" id="BC070208">
    <property type="protein sequence ID" value="AAH70208.1"/>
    <property type="molecule type" value="mRNA"/>
</dbReference>
<dbReference type="EMBL" id="BC106009">
    <property type="protein sequence ID" value="AAI06010.1"/>
    <property type="molecule type" value="mRNA"/>
</dbReference>
<dbReference type="EMBL" id="AB007181">
    <property type="protein sequence ID" value="BAA25840.1"/>
    <property type="molecule type" value="Genomic_DNA"/>
</dbReference>
<dbReference type="CCDS" id="CCDS3680.1"/>
<dbReference type="PIR" id="I68524">
    <property type="entry name" value="I68524"/>
</dbReference>
<dbReference type="RefSeq" id="NP_000986.2">
    <property type="nucleotide sequence ID" value="NM_000995.4"/>
</dbReference>
<dbReference type="RefSeq" id="NP_001306161.1">
    <property type="nucleotide sequence ID" value="NM_001319232.2"/>
</dbReference>
<dbReference type="RefSeq" id="NP_001306163.1">
    <property type="nucleotide sequence ID" value="NM_001319234.1"/>
</dbReference>
<dbReference type="RefSeq" id="NP_001306164.1">
    <property type="nucleotide sequence ID" value="NM_001319235.2"/>
</dbReference>
<dbReference type="RefSeq" id="NP_001306165.1">
    <property type="nucleotide sequence ID" value="NM_001319236.2"/>
</dbReference>
<dbReference type="RefSeq" id="NP_296374.1">
    <property type="nucleotide sequence ID" value="NM_033625.4"/>
</dbReference>
<dbReference type="PDB" id="4UG0">
    <property type="method" value="EM"/>
    <property type="chains" value="Lg=1-117"/>
</dbReference>
<dbReference type="PDB" id="4V6X">
    <property type="method" value="EM"/>
    <property type="resolution" value="5.00 A"/>
    <property type="chains" value="Cg=1-117"/>
</dbReference>
<dbReference type="PDB" id="5AJ0">
    <property type="method" value="EM"/>
    <property type="resolution" value="3.50 A"/>
    <property type="chains" value="Ag=1-117"/>
</dbReference>
<dbReference type="PDB" id="5LKS">
    <property type="method" value="EM"/>
    <property type="resolution" value="3.60 A"/>
    <property type="chains" value="Lg=1-117"/>
</dbReference>
<dbReference type="PDB" id="5T2C">
    <property type="method" value="EM"/>
    <property type="resolution" value="3.60 A"/>
    <property type="chains" value="a=1-117"/>
</dbReference>
<dbReference type="PDB" id="6IP5">
    <property type="method" value="EM"/>
    <property type="resolution" value="3.90 A"/>
    <property type="chains" value="2a=1-117"/>
</dbReference>
<dbReference type="PDB" id="6IP6">
    <property type="method" value="EM"/>
    <property type="resolution" value="4.50 A"/>
    <property type="chains" value="2a=1-117"/>
</dbReference>
<dbReference type="PDB" id="6IP8">
    <property type="method" value="EM"/>
    <property type="resolution" value="3.90 A"/>
    <property type="chains" value="2a=1-117"/>
</dbReference>
<dbReference type="PDB" id="6LQM">
    <property type="method" value="EM"/>
    <property type="resolution" value="3.09 A"/>
    <property type="chains" value="F=1-117"/>
</dbReference>
<dbReference type="PDB" id="6LSR">
    <property type="method" value="EM"/>
    <property type="resolution" value="3.13 A"/>
    <property type="chains" value="F=1-117"/>
</dbReference>
<dbReference type="PDB" id="6LSS">
    <property type="method" value="EM"/>
    <property type="resolution" value="3.23 A"/>
    <property type="chains" value="F=1-117"/>
</dbReference>
<dbReference type="PDB" id="6LU8">
    <property type="method" value="EM"/>
    <property type="resolution" value="3.13 A"/>
    <property type="chains" value="F=1-117"/>
</dbReference>
<dbReference type="PDB" id="6MTD">
    <property type="method" value="EM"/>
    <property type="resolution" value="3.30 A"/>
    <property type="chains" value="g=2-115"/>
</dbReference>
<dbReference type="PDB" id="6MTE">
    <property type="method" value="EM"/>
    <property type="resolution" value="3.40 A"/>
    <property type="chains" value="g=2-115"/>
</dbReference>
<dbReference type="PDB" id="6OLE">
    <property type="method" value="EM"/>
    <property type="resolution" value="3.10 A"/>
    <property type="chains" value="h=2-115"/>
</dbReference>
<dbReference type="PDB" id="6OLF">
    <property type="method" value="EM"/>
    <property type="resolution" value="3.90 A"/>
    <property type="chains" value="h=2-115"/>
</dbReference>
<dbReference type="PDB" id="6OLG">
    <property type="method" value="EM"/>
    <property type="resolution" value="3.40 A"/>
    <property type="chains" value="Ag=2-115"/>
</dbReference>
<dbReference type="PDB" id="6OLI">
    <property type="method" value="EM"/>
    <property type="resolution" value="3.50 A"/>
    <property type="chains" value="h=2-115"/>
</dbReference>
<dbReference type="PDB" id="6OLZ">
    <property type="method" value="EM"/>
    <property type="resolution" value="3.90 A"/>
    <property type="chains" value="Ag=2-115"/>
</dbReference>
<dbReference type="PDB" id="6OM0">
    <property type="method" value="EM"/>
    <property type="resolution" value="3.10 A"/>
    <property type="chains" value="h=2-115"/>
</dbReference>
<dbReference type="PDB" id="6OM7">
    <property type="method" value="EM"/>
    <property type="resolution" value="3.70 A"/>
    <property type="chains" value="h=2-115"/>
</dbReference>
<dbReference type="PDB" id="6QZP">
    <property type="method" value="EM"/>
    <property type="resolution" value="2.90 A"/>
    <property type="chains" value="Lg=2-115"/>
</dbReference>
<dbReference type="PDB" id="6W6L">
    <property type="method" value="EM"/>
    <property type="resolution" value="3.84 A"/>
    <property type="chains" value="h=1-117"/>
</dbReference>
<dbReference type="PDB" id="6XA1">
    <property type="method" value="EM"/>
    <property type="resolution" value="2.80 A"/>
    <property type="chains" value="Lg=2-115"/>
</dbReference>
<dbReference type="PDB" id="6Y0G">
    <property type="method" value="EM"/>
    <property type="resolution" value="3.20 A"/>
    <property type="chains" value="Lg=1-117"/>
</dbReference>
<dbReference type="PDB" id="6Y2L">
    <property type="method" value="EM"/>
    <property type="resolution" value="3.00 A"/>
    <property type="chains" value="Lg=1-117"/>
</dbReference>
<dbReference type="PDB" id="6Y57">
    <property type="method" value="EM"/>
    <property type="resolution" value="3.50 A"/>
    <property type="chains" value="Lg=1-117"/>
</dbReference>
<dbReference type="PDB" id="6Y6X">
    <property type="method" value="EM"/>
    <property type="resolution" value="2.80 A"/>
    <property type="chains" value="Lg=2-115"/>
</dbReference>
<dbReference type="PDB" id="6Z6L">
    <property type="method" value="EM"/>
    <property type="resolution" value="3.00 A"/>
    <property type="chains" value="Lg=1-117"/>
</dbReference>
<dbReference type="PDB" id="6Z6M">
    <property type="method" value="EM"/>
    <property type="resolution" value="3.10 A"/>
    <property type="chains" value="Lg=1-117"/>
</dbReference>
<dbReference type="PDB" id="6Z6N">
    <property type="method" value="EM"/>
    <property type="resolution" value="2.90 A"/>
    <property type="chains" value="Lg=1-117"/>
</dbReference>
<dbReference type="PDB" id="6ZM7">
    <property type="method" value="EM"/>
    <property type="resolution" value="2.70 A"/>
    <property type="chains" value="Lg=1-117"/>
</dbReference>
<dbReference type="PDB" id="6ZME">
    <property type="method" value="EM"/>
    <property type="resolution" value="3.00 A"/>
    <property type="chains" value="Lg=1-117"/>
</dbReference>
<dbReference type="PDB" id="6ZMI">
    <property type="method" value="EM"/>
    <property type="resolution" value="2.60 A"/>
    <property type="chains" value="Lg=1-117"/>
</dbReference>
<dbReference type="PDB" id="6ZMO">
    <property type="method" value="EM"/>
    <property type="resolution" value="3.10 A"/>
    <property type="chains" value="Lg=1-117"/>
</dbReference>
<dbReference type="PDB" id="7BHP">
    <property type="method" value="EM"/>
    <property type="resolution" value="3.30 A"/>
    <property type="chains" value="Lg=1-117"/>
</dbReference>
<dbReference type="PDB" id="7F5S">
    <property type="method" value="EM"/>
    <property type="resolution" value="2.72 A"/>
    <property type="chains" value="Lg=1-117"/>
</dbReference>
<dbReference type="PDB" id="7OW7">
    <property type="method" value="EM"/>
    <property type="resolution" value="2.20 A"/>
    <property type="chains" value="a=1-117"/>
</dbReference>
<dbReference type="PDB" id="7XNX">
    <property type="method" value="EM"/>
    <property type="resolution" value="2.70 A"/>
    <property type="chains" value="Lg=1-117"/>
</dbReference>
<dbReference type="PDB" id="7XNY">
    <property type="method" value="EM"/>
    <property type="resolution" value="2.50 A"/>
    <property type="chains" value="Lg=1-117"/>
</dbReference>
<dbReference type="PDB" id="8A3D">
    <property type="method" value="EM"/>
    <property type="resolution" value="1.67 A"/>
    <property type="chains" value="a=1-117"/>
</dbReference>
<dbReference type="PDB" id="8FKY">
    <property type="method" value="EM"/>
    <property type="resolution" value="2.67 A"/>
    <property type="chains" value="LR=1-117"/>
</dbReference>
<dbReference type="PDB" id="8FKZ">
    <property type="method" value="EM"/>
    <property type="resolution" value="3.04 A"/>
    <property type="chains" value="LR=1-117"/>
</dbReference>
<dbReference type="PDB" id="8FL2">
    <property type="method" value="EM"/>
    <property type="resolution" value="2.67 A"/>
    <property type="chains" value="LR=1-117"/>
</dbReference>
<dbReference type="PDB" id="8FL3">
    <property type="method" value="EM"/>
    <property type="resolution" value="2.53 A"/>
    <property type="chains" value="LR=1-117"/>
</dbReference>
<dbReference type="PDB" id="8FL4">
    <property type="method" value="EM"/>
    <property type="resolution" value="2.89 A"/>
    <property type="chains" value="LR=1-117"/>
</dbReference>
<dbReference type="PDB" id="8FL6">
    <property type="method" value="EM"/>
    <property type="resolution" value="2.62 A"/>
    <property type="chains" value="LR=1-117"/>
</dbReference>
<dbReference type="PDB" id="8FL7">
    <property type="method" value="EM"/>
    <property type="resolution" value="2.55 A"/>
    <property type="chains" value="LR=1-117"/>
</dbReference>
<dbReference type="PDB" id="8FL9">
    <property type="method" value="EM"/>
    <property type="resolution" value="2.75 A"/>
    <property type="chains" value="LR=1-117"/>
</dbReference>
<dbReference type="PDB" id="8FLA">
    <property type="method" value="EM"/>
    <property type="resolution" value="2.63 A"/>
    <property type="chains" value="LR=1-117"/>
</dbReference>
<dbReference type="PDB" id="8FLB">
    <property type="method" value="EM"/>
    <property type="resolution" value="2.55 A"/>
    <property type="chains" value="LR=1-117"/>
</dbReference>
<dbReference type="PDB" id="8FLC">
    <property type="method" value="EM"/>
    <property type="resolution" value="2.76 A"/>
    <property type="chains" value="LR=1-117"/>
</dbReference>
<dbReference type="PDB" id="8FLD">
    <property type="method" value="EM"/>
    <property type="resolution" value="2.58 A"/>
    <property type="chains" value="LR=1-117"/>
</dbReference>
<dbReference type="PDB" id="8FLE">
    <property type="method" value="EM"/>
    <property type="resolution" value="2.48 A"/>
    <property type="chains" value="LR=1-117"/>
</dbReference>
<dbReference type="PDB" id="8FLF">
    <property type="method" value="EM"/>
    <property type="resolution" value="2.65 A"/>
    <property type="chains" value="LR=1-117"/>
</dbReference>
<dbReference type="PDB" id="8G5Y">
    <property type="method" value="EM"/>
    <property type="resolution" value="2.29 A"/>
    <property type="chains" value="Lg=1-117"/>
</dbReference>
<dbReference type="PDB" id="8G5Z">
    <property type="method" value="EM"/>
    <property type="resolution" value="2.64 A"/>
    <property type="chains" value="Lg=2-115"/>
</dbReference>
<dbReference type="PDB" id="8G60">
    <property type="method" value="EM"/>
    <property type="resolution" value="2.54 A"/>
    <property type="chains" value="Lg=1-117"/>
</dbReference>
<dbReference type="PDB" id="8G61">
    <property type="method" value="EM"/>
    <property type="resolution" value="2.94 A"/>
    <property type="chains" value="Lg=1-117"/>
</dbReference>
<dbReference type="PDB" id="8G6J">
    <property type="method" value="EM"/>
    <property type="resolution" value="2.80 A"/>
    <property type="chains" value="Lg=1-117"/>
</dbReference>
<dbReference type="PDB" id="8GLP">
    <property type="method" value="EM"/>
    <property type="resolution" value="1.67 A"/>
    <property type="chains" value="Lg=1-117"/>
</dbReference>
<dbReference type="PDB" id="8IDT">
    <property type="method" value="EM"/>
    <property type="resolution" value="2.80 A"/>
    <property type="chains" value="F=1-117"/>
</dbReference>
<dbReference type="PDB" id="8IDY">
    <property type="method" value="EM"/>
    <property type="resolution" value="3.00 A"/>
    <property type="chains" value="F=1-117"/>
</dbReference>
<dbReference type="PDB" id="8IE3">
    <property type="method" value="EM"/>
    <property type="resolution" value="3.30 A"/>
    <property type="chains" value="F=1-117"/>
</dbReference>
<dbReference type="PDB" id="8IFD">
    <property type="method" value="EM"/>
    <property type="resolution" value="2.59 A"/>
    <property type="chains" value="2a=1-117"/>
</dbReference>
<dbReference type="PDB" id="8IFE">
    <property type="method" value="EM"/>
    <property type="resolution" value="2.57 A"/>
    <property type="chains" value="2a=1-117"/>
</dbReference>
<dbReference type="PDB" id="8INE">
    <property type="method" value="EM"/>
    <property type="resolution" value="3.20 A"/>
    <property type="chains" value="F=1-117"/>
</dbReference>
<dbReference type="PDB" id="8INF">
    <property type="method" value="EM"/>
    <property type="resolution" value="3.00 A"/>
    <property type="chains" value="F=1-117"/>
</dbReference>
<dbReference type="PDB" id="8INK">
    <property type="method" value="EM"/>
    <property type="resolution" value="3.20 A"/>
    <property type="chains" value="F=1-117"/>
</dbReference>
<dbReference type="PDB" id="8IPD">
    <property type="method" value="EM"/>
    <property type="resolution" value="3.20 A"/>
    <property type="chains" value="F=1-117"/>
</dbReference>
<dbReference type="PDB" id="8IPX">
    <property type="method" value="EM"/>
    <property type="resolution" value="4.30 A"/>
    <property type="chains" value="F=1-117"/>
</dbReference>
<dbReference type="PDB" id="8IPY">
    <property type="method" value="EM"/>
    <property type="resolution" value="3.20 A"/>
    <property type="chains" value="F=1-117"/>
</dbReference>
<dbReference type="PDB" id="8IR1">
    <property type="method" value="EM"/>
    <property type="resolution" value="3.30 A"/>
    <property type="chains" value="F=1-117"/>
</dbReference>
<dbReference type="PDB" id="8IR3">
    <property type="method" value="EM"/>
    <property type="resolution" value="3.50 A"/>
    <property type="chains" value="F=1-117"/>
</dbReference>
<dbReference type="PDB" id="8JDJ">
    <property type="method" value="EM"/>
    <property type="resolution" value="2.50 A"/>
    <property type="chains" value="l=1-117"/>
</dbReference>
<dbReference type="PDB" id="8JDK">
    <property type="method" value="EM"/>
    <property type="resolution" value="2.26 A"/>
    <property type="chains" value="l=1-117"/>
</dbReference>
<dbReference type="PDB" id="8JDL">
    <property type="method" value="EM"/>
    <property type="resolution" value="2.42 A"/>
    <property type="chains" value="l=1-117"/>
</dbReference>
<dbReference type="PDB" id="8JDM">
    <property type="method" value="EM"/>
    <property type="resolution" value="2.67 A"/>
    <property type="chains" value="l=1-117"/>
</dbReference>
<dbReference type="PDB" id="8K2C">
    <property type="method" value="EM"/>
    <property type="resolution" value="2.40 A"/>
    <property type="chains" value="Lg=1-117"/>
</dbReference>
<dbReference type="PDB" id="8OHD">
    <property type="method" value="EM"/>
    <property type="resolution" value="3.10 A"/>
    <property type="chains" value="Lg=1-117"/>
</dbReference>
<dbReference type="PDB" id="8OJ0">
    <property type="method" value="EM"/>
    <property type="resolution" value="3.30 A"/>
    <property type="chains" value="Lg=1-117"/>
</dbReference>
<dbReference type="PDB" id="8OJ5">
    <property type="method" value="EM"/>
    <property type="resolution" value="2.90 A"/>
    <property type="chains" value="Lg=1-117"/>
</dbReference>
<dbReference type="PDB" id="8OJ8">
    <property type="method" value="EM"/>
    <property type="resolution" value="3.30 A"/>
    <property type="chains" value="Lg=1-117"/>
</dbReference>
<dbReference type="PDB" id="8QFD">
    <property type="method" value="EM"/>
    <property type="resolution" value="2.20 A"/>
    <property type="chains" value="g=1-117"/>
</dbReference>
<dbReference type="PDB" id="8QOI">
    <property type="method" value="EM"/>
    <property type="resolution" value="1.90 A"/>
    <property type="chains" value="Lg=1-117"/>
</dbReference>
<dbReference type="PDB" id="8QYX">
    <property type="method" value="EM"/>
    <property type="resolution" value="1.78 A"/>
    <property type="chains" value="a1=1-117"/>
</dbReference>
<dbReference type="PDB" id="8RL2">
    <property type="method" value="EM"/>
    <property type="resolution" value="2.84 A"/>
    <property type="chains" value="Lg=1-117"/>
</dbReference>
<dbReference type="PDB" id="8UKB">
    <property type="method" value="EM"/>
    <property type="resolution" value="3.05 A"/>
    <property type="chains" value="Lg=2-115"/>
</dbReference>
<dbReference type="PDB" id="8XSX">
    <property type="method" value="EM"/>
    <property type="resolution" value="2.40 A"/>
    <property type="chains" value="Lg=1-117"/>
</dbReference>
<dbReference type="PDB" id="8XSY">
    <property type="method" value="EM"/>
    <property type="resolution" value="3.00 A"/>
    <property type="chains" value="Lg=1-117"/>
</dbReference>
<dbReference type="PDB" id="8XSZ">
    <property type="method" value="EM"/>
    <property type="resolution" value="3.20 A"/>
    <property type="chains" value="Lg=1-117"/>
</dbReference>
<dbReference type="PDB" id="8Y0W">
    <property type="method" value="EM"/>
    <property type="resolution" value="3.40 A"/>
    <property type="chains" value="Lg=1-117"/>
</dbReference>
<dbReference type="PDB" id="8Y0X">
    <property type="method" value="EM"/>
    <property type="resolution" value="3.30 A"/>
    <property type="chains" value="Lg=1-117"/>
</dbReference>
<dbReference type="PDB" id="8YOO">
    <property type="method" value="EM"/>
    <property type="resolution" value="2.00 A"/>
    <property type="chains" value="Lg=1-117"/>
</dbReference>
<dbReference type="PDB" id="8YOP">
    <property type="method" value="EM"/>
    <property type="resolution" value="2.20 A"/>
    <property type="chains" value="Lg=1-117"/>
</dbReference>
<dbReference type="PDB" id="9C3H">
    <property type="method" value="EM"/>
    <property type="resolution" value="2.00 A"/>
    <property type="chains" value="Lg=1-117"/>
</dbReference>
<dbReference type="PDB" id="9G8M">
    <property type="method" value="EM"/>
    <property type="resolution" value="3.30 A"/>
    <property type="chains" value="Lg=1-117"/>
</dbReference>
<dbReference type="PDB" id="9GMO">
    <property type="method" value="EM"/>
    <property type="resolution" value="2.59 A"/>
    <property type="chains" value="a=1-117"/>
</dbReference>
<dbReference type="PDBsum" id="4UG0"/>
<dbReference type="PDBsum" id="4V6X"/>
<dbReference type="PDBsum" id="5AJ0"/>
<dbReference type="PDBsum" id="5LKS"/>
<dbReference type="PDBsum" id="5T2C"/>
<dbReference type="PDBsum" id="6IP5"/>
<dbReference type="PDBsum" id="6IP6"/>
<dbReference type="PDBsum" id="6IP8"/>
<dbReference type="PDBsum" id="6LQM"/>
<dbReference type="PDBsum" id="6LSR"/>
<dbReference type="PDBsum" id="6LSS"/>
<dbReference type="PDBsum" id="6LU8"/>
<dbReference type="PDBsum" id="6MTD"/>
<dbReference type="PDBsum" id="6MTE"/>
<dbReference type="PDBsum" id="6OLE"/>
<dbReference type="PDBsum" id="6OLF"/>
<dbReference type="PDBsum" id="6OLG"/>
<dbReference type="PDBsum" id="6OLI"/>
<dbReference type="PDBsum" id="6OLZ"/>
<dbReference type="PDBsum" id="6OM0"/>
<dbReference type="PDBsum" id="6OM7"/>
<dbReference type="PDBsum" id="6QZP"/>
<dbReference type="PDBsum" id="6W6L"/>
<dbReference type="PDBsum" id="6XA1"/>
<dbReference type="PDBsum" id="6Y0G"/>
<dbReference type="PDBsum" id="6Y2L"/>
<dbReference type="PDBsum" id="6Y57"/>
<dbReference type="PDBsum" id="6Y6X"/>
<dbReference type="PDBsum" id="6Z6L"/>
<dbReference type="PDBsum" id="6Z6M"/>
<dbReference type="PDBsum" id="6Z6N"/>
<dbReference type="PDBsum" id="6ZM7"/>
<dbReference type="PDBsum" id="6ZME"/>
<dbReference type="PDBsum" id="6ZMI"/>
<dbReference type="PDBsum" id="6ZMO"/>
<dbReference type="PDBsum" id="7BHP"/>
<dbReference type="PDBsum" id="7F5S"/>
<dbReference type="PDBsum" id="7OW7"/>
<dbReference type="PDBsum" id="7XNX"/>
<dbReference type="PDBsum" id="7XNY"/>
<dbReference type="PDBsum" id="8A3D"/>
<dbReference type="PDBsum" id="8FKY"/>
<dbReference type="PDBsum" id="8FKZ"/>
<dbReference type="PDBsum" id="8FL2"/>
<dbReference type="PDBsum" id="8FL3"/>
<dbReference type="PDBsum" id="8FL4"/>
<dbReference type="PDBsum" id="8FL6"/>
<dbReference type="PDBsum" id="8FL7"/>
<dbReference type="PDBsum" id="8FL9"/>
<dbReference type="PDBsum" id="8FLA"/>
<dbReference type="PDBsum" id="8FLB"/>
<dbReference type="PDBsum" id="8FLC"/>
<dbReference type="PDBsum" id="8FLD"/>
<dbReference type="PDBsum" id="8FLE"/>
<dbReference type="PDBsum" id="8FLF"/>
<dbReference type="PDBsum" id="8G5Y"/>
<dbReference type="PDBsum" id="8G5Z"/>
<dbReference type="PDBsum" id="8G60"/>
<dbReference type="PDBsum" id="8G61"/>
<dbReference type="PDBsum" id="8G6J"/>
<dbReference type="PDBsum" id="8GLP"/>
<dbReference type="PDBsum" id="8IDT"/>
<dbReference type="PDBsum" id="8IDY"/>
<dbReference type="PDBsum" id="8IE3"/>
<dbReference type="PDBsum" id="8IFD"/>
<dbReference type="PDBsum" id="8IFE"/>
<dbReference type="PDBsum" id="8INE"/>
<dbReference type="PDBsum" id="8INF"/>
<dbReference type="PDBsum" id="8INK"/>
<dbReference type="PDBsum" id="8IPD"/>
<dbReference type="PDBsum" id="8IPX"/>
<dbReference type="PDBsum" id="8IPY"/>
<dbReference type="PDBsum" id="8IR1"/>
<dbReference type="PDBsum" id="8IR3"/>
<dbReference type="PDBsum" id="8JDJ"/>
<dbReference type="PDBsum" id="8JDK"/>
<dbReference type="PDBsum" id="8JDL"/>
<dbReference type="PDBsum" id="8JDM"/>
<dbReference type="PDBsum" id="8K2C"/>
<dbReference type="PDBsum" id="8OHD"/>
<dbReference type="PDBsum" id="8OJ0"/>
<dbReference type="PDBsum" id="8OJ5"/>
<dbReference type="PDBsum" id="8OJ8"/>
<dbReference type="PDBsum" id="8QFD"/>
<dbReference type="PDBsum" id="8QOI"/>
<dbReference type="PDBsum" id="8QYX"/>
<dbReference type="PDBsum" id="8RL2"/>
<dbReference type="PDBsum" id="8UKB"/>
<dbReference type="PDBsum" id="8XSX"/>
<dbReference type="PDBsum" id="8XSY"/>
<dbReference type="PDBsum" id="8XSZ"/>
<dbReference type="PDBsum" id="8Y0W"/>
<dbReference type="PDBsum" id="8Y0X"/>
<dbReference type="PDBsum" id="8YOO"/>
<dbReference type="PDBsum" id="8YOP"/>
<dbReference type="PDBsum" id="9C3H"/>
<dbReference type="PDBsum" id="9G8M"/>
<dbReference type="PDBsum" id="9GMO"/>
<dbReference type="EMDB" id="EMD-0948"/>
<dbReference type="EMDB" id="EMD-0963"/>
<dbReference type="EMDB" id="EMD-0964"/>
<dbReference type="EMDB" id="EMD-0978"/>
<dbReference type="EMDB" id="EMD-10668"/>
<dbReference type="EMDB" id="EMD-10674"/>
<dbReference type="EMDB" id="EMD-10690"/>
<dbReference type="EMDB" id="EMD-10709"/>
<dbReference type="EMDB" id="EMD-11098"/>
<dbReference type="EMDB" id="EMD-11099"/>
<dbReference type="EMDB" id="EMD-11100"/>
<dbReference type="EMDB" id="EMD-11288"/>
<dbReference type="EMDB" id="EMD-11289"/>
<dbReference type="EMDB" id="EMD-11292"/>
<dbReference type="EMDB" id="EMD-11299"/>
<dbReference type="EMDB" id="EMD-12189"/>
<dbReference type="EMDB" id="EMD-13094"/>
<dbReference type="EMDB" id="EMD-15113"/>
<dbReference type="EMDB" id="EMD-16880"/>
<dbReference type="EMDB" id="EMD-16905"/>
<dbReference type="EMDB" id="EMD-16908"/>
<dbReference type="EMDB" id="EMD-18382"/>
<dbReference type="EMDB" id="EMD-18539"/>
<dbReference type="EMDB" id="EMD-18765"/>
<dbReference type="EMDB" id="EMD-19330"/>
<dbReference type="EMDB" id="EMD-29261"/>
<dbReference type="EMDB" id="EMD-29262"/>
<dbReference type="EMDB" id="EMD-29265"/>
<dbReference type="EMDB" id="EMD-29266"/>
<dbReference type="EMDB" id="EMD-29267"/>
<dbReference type="EMDB" id="EMD-29268"/>
<dbReference type="EMDB" id="EMD-29269"/>
<dbReference type="EMDB" id="EMD-29271"/>
<dbReference type="EMDB" id="EMD-29272"/>
<dbReference type="EMDB" id="EMD-29273"/>
<dbReference type="EMDB" id="EMD-29274"/>
<dbReference type="EMDB" id="EMD-29275"/>
<dbReference type="EMDB" id="EMD-29276"/>
<dbReference type="EMDB" id="EMD-29277"/>
<dbReference type="EMDB" id="EMD-29757"/>
<dbReference type="EMDB" id="EMD-29758"/>
<dbReference type="EMDB" id="EMD-29759"/>
<dbReference type="EMDB" id="EMD-29760"/>
<dbReference type="EMDB" id="EMD-29771"/>
<dbReference type="EMDB" id="EMD-31465"/>
<dbReference type="EMDB" id="EMD-33329"/>
<dbReference type="EMDB" id="EMD-33330"/>
<dbReference type="EMDB" id="EMD-35370"/>
<dbReference type="EMDB" id="EMD-35371"/>
<dbReference type="EMDB" id="EMD-35375"/>
<dbReference type="EMDB" id="EMD-35413"/>
<dbReference type="EMDB" id="EMD-35414"/>
<dbReference type="EMDB" id="EMD-35596"/>
<dbReference type="EMDB" id="EMD-35597"/>
<dbReference type="EMDB" id="EMD-35599"/>
<dbReference type="EMDB" id="EMD-35639"/>
<dbReference type="EMDB" id="EMD-35649"/>
<dbReference type="EMDB" id="EMD-35651"/>
<dbReference type="EMDB" id="EMD-35672"/>
<dbReference type="EMDB" id="EMD-35673"/>
<dbReference type="EMDB" id="EMD-36178"/>
<dbReference type="EMDB" id="EMD-36179"/>
<dbReference type="EMDB" id="EMD-36180"/>
<dbReference type="EMDB" id="EMD-36181"/>
<dbReference type="EMDB" id="EMD-36838"/>
<dbReference type="EMDB" id="EMD-38629"/>
<dbReference type="EMDB" id="EMD-38630"/>
<dbReference type="EMDB" id="EMD-38631"/>
<dbReference type="EMDB" id="EMD-3883"/>
<dbReference type="EMDB" id="EMD-39455"/>
<dbReference type="EMDB" id="EMD-39456"/>
<dbReference type="EMDB" id="EMD-40205"/>
<dbReference type="EMDB" id="EMD-4070"/>
<dbReference type="EMDB" id="EMD-42351"/>
<dbReference type="EMDB" id="EMD-45170"/>
<dbReference type="EMDB" id="EMD-51132"/>
<dbReference type="EMDB" id="EMD-51452"/>
<dbReference type="EMDB" id="EMD-9240"/>
<dbReference type="EMDB" id="EMD-9242"/>
<dbReference type="EMDB" id="EMD-9701"/>
<dbReference type="EMDB" id="EMD-9702"/>
<dbReference type="EMDB" id="EMD-9703"/>
<dbReference type="SMR" id="P49207"/>
<dbReference type="BioGRID" id="112083">
    <property type="interactions" value="299"/>
</dbReference>
<dbReference type="ComplexPortal" id="CPX-5183">
    <property type="entry name" value="60S cytosolic large ribosomal subunit"/>
</dbReference>
<dbReference type="ComplexPortal" id="CPX-7664">
    <property type="entry name" value="60S cytosolic large ribosomal subunit, testis-specific variant"/>
</dbReference>
<dbReference type="ComplexPortal" id="CPX-7665">
    <property type="entry name" value="60S cytosolic large ribosomal subunit, striated muscle variant"/>
</dbReference>
<dbReference type="CORUM" id="P49207"/>
<dbReference type="FunCoup" id="P49207">
    <property type="interactions" value="2279"/>
</dbReference>
<dbReference type="IntAct" id="P49207">
    <property type="interactions" value="113"/>
</dbReference>
<dbReference type="MINT" id="P49207"/>
<dbReference type="STRING" id="9606.ENSP00000378163"/>
<dbReference type="GlyGen" id="P49207">
    <property type="glycosylation" value="1 site, 1 O-linked glycan (1 site)"/>
</dbReference>
<dbReference type="iPTMnet" id="P49207"/>
<dbReference type="MetOSite" id="P49207"/>
<dbReference type="PhosphoSitePlus" id="P49207"/>
<dbReference type="SwissPalm" id="P49207"/>
<dbReference type="BioMuta" id="RPL34"/>
<dbReference type="jPOST" id="P49207"/>
<dbReference type="MassIVE" id="P49207"/>
<dbReference type="PaxDb" id="9606-ENSP00000378163"/>
<dbReference type="PeptideAtlas" id="P49207"/>
<dbReference type="ProteomicsDB" id="55970"/>
<dbReference type="Pumba" id="P49207"/>
<dbReference type="TopDownProteomics" id="P49207"/>
<dbReference type="Antibodypedia" id="26278">
    <property type="antibodies" value="154 antibodies from 23 providers"/>
</dbReference>
<dbReference type="DNASU" id="6164"/>
<dbReference type="Ensembl" id="ENST00000394665.5">
    <property type="protein sequence ID" value="ENSP00000378160.1"/>
    <property type="gene ID" value="ENSG00000109475.18"/>
</dbReference>
<dbReference type="Ensembl" id="ENST00000394667.8">
    <property type="protein sequence ID" value="ENSP00000378162.3"/>
    <property type="gene ID" value="ENSG00000109475.18"/>
</dbReference>
<dbReference type="Ensembl" id="ENST00000394668.3">
    <property type="protein sequence ID" value="ENSP00000378163.2"/>
    <property type="gene ID" value="ENSG00000109475.18"/>
</dbReference>
<dbReference type="Ensembl" id="ENST00000502534.5">
    <property type="protein sequence ID" value="ENSP00000423983.1"/>
    <property type="gene ID" value="ENSG00000109475.18"/>
</dbReference>
<dbReference type="Ensembl" id="ENST00000506397.5">
    <property type="protein sequence ID" value="ENSP00000423316.1"/>
    <property type="gene ID" value="ENSG00000109475.18"/>
</dbReference>
<dbReference type="GeneID" id="6164"/>
<dbReference type="KEGG" id="hsa:6164"/>
<dbReference type="MANE-Select" id="ENST00000394667.8">
    <property type="protein sequence ID" value="ENSP00000378162.3"/>
    <property type="RefSeq nucleotide sequence ID" value="NM_001319236.2"/>
    <property type="RefSeq protein sequence ID" value="NP_001306165.1"/>
</dbReference>
<dbReference type="UCSC" id="uc003hza.4">
    <property type="organism name" value="human"/>
</dbReference>
<dbReference type="AGR" id="HGNC:10340"/>
<dbReference type="CTD" id="6164"/>
<dbReference type="DisGeNET" id="6164"/>
<dbReference type="GeneCards" id="RPL34"/>
<dbReference type="HGNC" id="HGNC:10340">
    <property type="gene designation" value="RPL34"/>
</dbReference>
<dbReference type="HPA" id="ENSG00000109475">
    <property type="expression patterns" value="Low tissue specificity"/>
</dbReference>
<dbReference type="MalaCards" id="RPL34"/>
<dbReference type="MIM" id="616862">
    <property type="type" value="gene"/>
</dbReference>
<dbReference type="neXtProt" id="NX_P49207"/>
<dbReference type="OpenTargets" id="ENSG00000109475"/>
<dbReference type="PharmGKB" id="PA34723"/>
<dbReference type="VEuPathDB" id="HostDB:ENSG00000109475"/>
<dbReference type="eggNOG" id="KOG1790">
    <property type="taxonomic scope" value="Eukaryota"/>
</dbReference>
<dbReference type="GeneTree" id="ENSGT00390000008294"/>
<dbReference type="HOGENOM" id="CLU_118652_0_1_1"/>
<dbReference type="InParanoid" id="P49207"/>
<dbReference type="OMA" id="RCHKCVR"/>
<dbReference type="OrthoDB" id="277449at2759"/>
<dbReference type="PAN-GO" id="P49207">
    <property type="GO annotations" value="2 GO annotations based on evolutionary models"/>
</dbReference>
<dbReference type="PhylomeDB" id="P49207"/>
<dbReference type="TreeFam" id="TF314326"/>
<dbReference type="PathwayCommons" id="P49207"/>
<dbReference type="Reactome" id="R-HSA-156827">
    <property type="pathway name" value="L13a-mediated translational silencing of Ceruloplasmin expression"/>
</dbReference>
<dbReference type="Reactome" id="R-HSA-156902">
    <property type="pathway name" value="Peptide chain elongation"/>
</dbReference>
<dbReference type="Reactome" id="R-HSA-1799339">
    <property type="pathway name" value="SRP-dependent cotranslational protein targeting to membrane"/>
</dbReference>
<dbReference type="Reactome" id="R-HSA-192823">
    <property type="pathway name" value="Viral mRNA Translation"/>
</dbReference>
<dbReference type="Reactome" id="R-HSA-2408557">
    <property type="pathway name" value="Selenocysteine synthesis"/>
</dbReference>
<dbReference type="Reactome" id="R-HSA-6791226">
    <property type="pathway name" value="Major pathway of rRNA processing in the nucleolus and cytosol"/>
</dbReference>
<dbReference type="Reactome" id="R-HSA-72689">
    <property type="pathway name" value="Formation of a pool of free 40S subunits"/>
</dbReference>
<dbReference type="Reactome" id="R-HSA-72706">
    <property type="pathway name" value="GTP hydrolysis and joining of the 60S ribosomal subunit"/>
</dbReference>
<dbReference type="Reactome" id="R-HSA-72764">
    <property type="pathway name" value="Eukaryotic Translation Termination"/>
</dbReference>
<dbReference type="Reactome" id="R-HSA-9010553">
    <property type="pathway name" value="Regulation of expression of SLITs and ROBOs"/>
</dbReference>
<dbReference type="Reactome" id="R-HSA-9633012">
    <property type="pathway name" value="Response of EIF2AK4 (GCN2) to amino acid deficiency"/>
</dbReference>
<dbReference type="Reactome" id="R-HSA-975956">
    <property type="pathway name" value="Nonsense Mediated Decay (NMD) independent of the Exon Junction Complex (EJC)"/>
</dbReference>
<dbReference type="Reactome" id="R-HSA-975957">
    <property type="pathway name" value="Nonsense Mediated Decay (NMD) enhanced by the Exon Junction Complex (EJC)"/>
</dbReference>
<dbReference type="SignaLink" id="P49207"/>
<dbReference type="SIGNOR" id="P49207"/>
<dbReference type="BioGRID-ORCS" id="6164">
    <property type="hits" value="812 hits in 1105 CRISPR screens"/>
</dbReference>
<dbReference type="CD-CODE" id="91857CE7">
    <property type="entry name" value="Nucleolus"/>
</dbReference>
<dbReference type="ChiTaRS" id="RPL34">
    <property type="organism name" value="human"/>
</dbReference>
<dbReference type="GeneWiki" id="RPL34"/>
<dbReference type="GenomeRNAi" id="6164"/>
<dbReference type="Pharos" id="P49207">
    <property type="development level" value="Tbio"/>
</dbReference>
<dbReference type="PRO" id="PR:P49207"/>
<dbReference type="Proteomes" id="UP000005640">
    <property type="component" value="Chromosome 4"/>
</dbReference>
<dbReference type="RNAct" id="P49207">
    <property type="molecule type" value="protein"/>
</dbReference>
<dbReference type="Bgee" id="ENSG00000109475">
    <property type="expression patterns" value="Expressed in caput epididymis and 210 other cell types or tissues"/>
</dbReference>
<dbReference type="ExpressionAtlas" id="P49207">
    <property type="expression patterns" value="baseline and differential"/>
</dbReference>
<dbReference type="GO" id="GO:0005737">
    <property type="term" value="C:cytoplasm"/>
    <property type="evidence" value="ECO:0000303"/>
    <property type="project" value="ComplexPortal"/>
</dbReference>
<dbReference type="GO" id="GO:0005829">
    <property type="term" value="C:cytosol"/>
    <property type="evidence" value="ECO:0000314"/>
    <property type="project" value="HPA"/>
</dbReference>
<dbReference type="GO" id="GO:0022625">
    <property type="term" value="C:cytosolic large ribosomal subunit"/>
    <property type="evidence" value="ECO:0000314"/>
    <property type="project" value="UniProtKB"/>
</dbReference>
<dbReference type="GO" id="GO:0022626">
    <property type="term" value="C:cytosolic ribosome"/>
    <property type="evidence" value="ECO:0000314"/>
    <property type="project" value="FlyBase"/>
</dbReference>
<dbReference type="GO" id="GO:0005783">
    <property type="term" value="C:endoplasmic reticulum"/>
    <property type="evidence" value="ECO:0000314"/>
    <property type="project" value="HPA"/>
</dbReference>
<dbReference type="GO" id="GO:0070062">
    <property type="term" value="C:extracellular exosome"/>
    <property type="evidence" value="ECO:0007005"/>
    <property type="project" value="UniProtKB"/>
</dbReference>
<dbReference type="GO" id="GO:0005730">
    <property type="term" value="C:nucleolus"/>
    <property type="evidence" value="ECO:0000314"/>
    <property type="project" value="HPA"/>
</dbReference>
<dbReference type="GO" id="GO:0045202">
    <property type="term" value="C:synapse"/>
    <property type="evidence" value="ECO:0007669"/>
    <property type="project" value="Ensembl"/>
</dbReference>
<dbReference type="GO" id="GO:0045296">
    <property type="term" value="F:cadherin binding"/>
    <property type="evidence" value="ECO:0007005"/>
    <property type="project" value="BHF-UCL"/>
</dbReference>
<dbReference type="GO" id="GO:0003723">
    <property type="term" value="F:RNA binding"/>
    <property type="evidence" value="ECO:0000304"/>
    <property type="project" value="ProtInc"/>
</dbReference>
<dbReference type="GO" id="GO:0003735">
    <property type="term" value="F:structural constituent of ribosome"/>
    <property type="evidence" value="ECO:0000314"/>
    <property type="project" value="UniProtKB"/>
</dbReference>
<dbReference type="GO" id="GO:0002181">
    <property type="term" value="P:cytoplasmic translation"/>
    <property type="evidence" value="ECO:0000303"/>
    <property type="project" value="ComplexPortal"/>
</dbReference>
<dbReference type="GO" id="GO:0006412">
    <property type="term" value="P:translation"/>
    <property type="evidence" value="ECO:0000304"/>
    <property type="project" value="ProtInc"/>
</dbReference>
<dbReference type="Gene3D" id="6.20.340.10">
    <property type="match status" value="1"/>
</dbReference>
<dbReference type="Gene3D" id="6.20.370.70">
    <property type="match status" value="1"/>
</dbReference>
<dbReference type="InterPro" id="IPR008195">
    <property type="entry name" value="Ribosomal_eL34"/>
</dbReference>
<dbReference type="InterPro" id="IPR038562">
    <property type="entry name" value="Ribosomal_eL34_C_sf"/>
</dbReference>
<dbReference type="InterPro" id="IPR018065">
    <property type="entry name" value="Ribosomal_eL34_CS"/>
</dbReference>
<dbReference type="PANTHER" id="PTHR46595">
    <property type="entry name" value="60S RIBOSOMAL PROTEIN L34"/>
    <property type="match status" value="1"/>
</dbReference>
<dbReference type="Pfam" id="PF01199">
    <property type="entry name" value="Ribosomal_L34e"/>
    <property type="match status" value="1"/>
</dbReference>
<dbReference type="PRINTS" id="PR01250">
    <property type="entry name" value="RIBOSOMALL34"/>
</dbReference>
<dbReference type="PROSITE" id="PS01145">
    <property type="entry name" value="RIBOSOMAL_L34E"/>
    <property type="match status" value="1"/>
</dbReference>
<feature type="initiator methionine" description="Removed" evidence="3">
    <location>
        <position position="1"/>
    </location>
</feature>
<feature type="chain" id="PRO_0000131831" description="Large ribosomal subunit protein eL34">
    <location>
        <begin position="2"/>
        <end position="117"/>
    </location>
</feature>
<feature type="modified residue" description="Phosphoserine" evidence="20 21">
    <location>
        <position position="12"/>
    </location>
</feature>
<feature type="modified residue" description="N6-acetyllysine" evidence="19">
    <location>
        <position position="36"/>
    </location>
</feature>
<feature type="modified residue" description="N6-acetyllysine" evidence="2">
    <location>
        <position position="43"/>
    </location>
</feature>
<feature type="cross-link" description="Glycyl lysine isopeptide (Lys-Gly) (interchain with G-Cter in SUMO2)" evidence="22">
    <location>
        <position position="108"/>
    </location>
</feature>
<feature type="sequence conflict" description="In Ref. 1; AAC41916." evidence="9" ref="1">
    <original>R</original>
    <variation>K</variation>
    <location>
        <position position="52"/>
    </location>
</feature>
<feature type="sequence conflict" description="In Ref. 1; AAC41916." evidence="9" ref="1">
    <original>A</original>
    <variation>P</variation>
    <location>
        <position position="58"/>
    </location>
</feature>
<feature type="sequence conflict" description="In Ref. 1; AAC41916." evidence="9" ref="1">
    <original>V</original>
    <variation>I</variation>
    <location>
        <position position="103"/>
    </location>
</feature>
<accession>P49207</accession>
<accession>Q6FG66</accession>
<accession>Q9BUZ2</accession>
<organism>
    <name type="scientific">Homo sapiens</name>
    <name type="common">Human</name>
    <dbReference type="NCBI Taxonomy" id="9606"/>
    <lineage>
        <taxon>Eukaryota</taxon>
        <taxon>Metazoa</taxon>
        <taxon>Chordata</taxon>
        <taxon>Craniata</taxon>
        <taxon>Vertebrata</taxon>
        <taxon>Euteleostomi</taxon>
        <taxon>Mammalia</taxon>
        <taxon>Eutheria</taxon>
        <taxon>Euarchontoglires</taxon>
        <taxon>Primates</taxon>
        <taxon>Haplorrhini</taxon>
        <taxon>Catarrhini</taxon>
        <taxon>Hominidae</taxon>
        <taxon>Homo</taxon>
    </lineage>
</organism>
<name>RL34_HUMAN</name>
<keyword id="KW-0002">3D-structure</keyword>
<keyword id="KW-0007">Acetylation</keyword>
<keyword id="KW-0963">Cytoplasm</keyword>
<keyword id="KW-0903">Direct protein sequencing</keyword>
<keyword id="KW-0256">Endoplasmic reticulum</keyword>
<keyword id="KW-1017">Isopeptide bond</keyword>
<keyword id="KW-0597">Phosphoprotein</keyword>
<keyword id="KW-1267">Proteomics identification</keyword>
<keyword id="KW-1185">Reference proteome</keyword>
<keyword id="KW-0687">Ribonucleoprotein</keyword>
<keyword id="KW-0689">Ribosomal protein</keyword>
<keyword id="KW-0832">Ubl conjugation</keyword>
<evidence type="ECO:0000250" key="1">
    <source>
        <dbReference type="UniProtKB" id="Q29223"/>
    </source>
</evidence>
<evidence type="ECO:0000250" key="2">
    <source>
        <dbReference type="UniProtKB" id="Q9D1R9"/>
    </source>
</evidence>
<evidence type="ECO:0000269" key="3">
    <source>
    </source>
</evidence>
<evidence type="ECO:0000269" key="4">
    <source>
    </source>
</evidence>
<evidence type="ECO:0000269" key="5">
    <source>
    </source>
</evidence>
<evidence type="ECO:0000269" key="6">
    <source>
    </source>
</evidence>
<evidence type="ECO:0000269" key="7">
    <source>
    </source>
</evidence>
<evidence type="ECO:0000303" key="8">
    <source>
    </source>
</evidence>
<evidence type="ECO:0000305" key="9"/>
<evidence type="ECO:0000305" key="10">
    <source>
    </source>
</evidence>
<evidence type="ECO:0000305" key="11">
    <source>
    </source>
</evidence>
<evidence type="ECO:0000305" key="12">
    <source>
    </source>
</evidence>
<evidence type="ECO:0007744" key="13">
    <source>
        <dbReference type="PDB" id="4UG0"/>
    </source>
</evidence>
<evidence type="ECO:0007744" key="14">
    <source>
        <dbReference type="PDB" id="5AJ0"/>
    </source>
</evidence>
<evidence type="ECO:0007744" key="15">
    <source>
        <dbReference type="PDB" id="6LQM"/>
    </source>
</evidence>
<evidence type="ECO:0007744" key="16">
    <source>
        <dbReference type="PDB" id="6LSR"/>
    </source>
</evidence>
<evidence type="ECO:0007744" key="17">
    <source>
        <dbReference type="PDB" id="6LSS"/>
    </source>
</evidence>
<evidence type="ECO:0007744" key="18">
    <source>
        <dbReference type="PDB" id="6LU8"/>
    </source>
</evidence>
<evidence type="ECO:0007744" key="19">
    <source>
    </source>
</evidence>
<evidence type="ECO:0007744" key="20">
    <source>
    </source>
</evidence>
<evidence type="ECO:0007744" key="21">
    <source>
    </source>
</evidence>
<evidence type="ECO:0007744" key="22">
    <source>
    </source>
</evidence>
<gene>
    <name type="primary">RPL34</name>
</gene>
<proteinExistence type="evidence at protein level"/>
<reference key="1">
    <citation type="journal article" date="1995" name="Genomics">
        <title>Generation of a transcription map at the HSD17B locus centromeric to BRCA1 at 17q21.</title>
        <authorList>
            <person name="Rommens J.M."/>
            <person name="Durocher F."/>
            <person name="McArthur J."/>
            <person name="Tonin P."/>
            <person name="Leblanc J.-F."/>
            <person name="Allen T."/>
            <person name="Samson C."/>
            <person name="Ferri L."/>
            <person name="Narod S."/>
            <person name="Morgan K."/>
            <person name="Simard J."/>
        </authorList>
    </citation>
    <scope>NUCLEOTIDE SEQUENCE [MRNA]</scope>
    <source>
        <tissue>Ovary</tissue>
    </source>
</reference>
<reference key="2">
    <citation type="journal article" date="2002" name="Genome Res.">
        <title>The human ribosomal protein genes: sequencing and comparative analysis of 73 genes.</title>
        <authorList>
            <person name="Yoshihama M."/>
            <person name="Uechi T."/>
            <person name="Asakawa S."/>
            <person name="Kawasaki K."/>
            <person name="Kato S."/>
            <person name="Higa S."/>
            <person name="Maeda N."/>
            <person name="Minoshima S."/>
            <person name="Tanaka T."/>
            <person name="Shimizu N."/>
            <person name="Kenmochi N."/>
        </authorList>
    </citation>
    <scope>NUCLEOTIDE SEQUENCE [GENOMIC DNA]</scope>
</reference>
<reference key="3">
    <citation type="submission" date="2004-06" db="EMBL/GenBank/DDBJ databases">
        <title>Cloning of human full open reading frames in Gateway(TM) system entry vector (pDONR201).</title>
        <authorList>
            <person name="Halleck A."/>
            <person name="Ebert L."/>
            <person name="Mkoundinya M."/>
            <person name="Schick M."/>
            <person name="Eisenstein S."/>
            <person name="Neubert P."/>
            <person name="Kstrang K."/>
            <person name="Schatten R."/>
            <person name="Shen B."/>
            <person name="Henze S."/>
            <person name="Mar W."/>
            <person name="Korn B."/>
            <person name="Zuo D."/>
            <person name="Hu Y."/>
            <person name="LaBaer J."/>
        </authorList>
    </citation>
    <scope>NUCLEOTIDE SEQUENCE [LARGE SCALE MRNA]</scope>
</reference>
<reference key="4">
    <citation type="journal article" date="2004" name="Genome Res.">
        <title>The status, quality, and expansion of the NIH full-length cDNA project: the Mammalian Gene Collection (MGC).</title>
        <authorList>
            <consortium name="The MGC Project Team"/>
        </authorList>
    </citation>
    <scope>NUCLEOTIDE SEQUENCE [LARGE SCALE MRNA]</scope>
    <source>
        <tissue>Bone</tissue>
        <tissue>Eye</tissue>
    </source>
</reference>
<reference key="5">
    <citation type="journal article" date="1998" name="Genome Res.">
        <title>A map of 75 human ribosomal protein genes.</title>
        <authorList>
            <person name="Kenmochi N."/>
            <person name="Kawaguchi T."/>
            <person name="Rozen S."/>
            <person name="Davis E."/>
            <person name="Goodman N."/>
            <person name="Hudson T.J."/>
            <person name="Tanaka T."/>
            <person name="Page D.C."/>
        </authorList>
    </citation>
    <scope>NUCLEOTIDE SEQUENCE [GENOMIC DNA] OF 4-48</scope>
</reference>
<reference key="6">
    <citation type="journal article" date="2003" name="J. Protein Chem.">
        <title>Characterization and analysis of posttranslational modifications of the human large cytoplasmic ribosomal subunit proteins by mass spectrometry and Edman sequencing.</title>
        <authorList>
            <person name="Odintsova T.I."/>
            <person name="Muller E.C."/>
            <person name="Ivanov A.V."/>
            <person name="Egorov T.A."/>
            <person name="Bienert R."/>
            <person name="Vladimirov S.N."/>
            <person name="Kostka S."/>
            <person name="Otto A."/>
            <person name="Wittmann-Liebold B."/>
            <person name="Karpova G.G."/>
        </authorList>
    </citation>
    <scope>PROTEIN SEQUENCE OF 2-12</scope>
    <scope>IDENTIFICATION BY MASS SPECTROMETRY</scope>
    <scope>FUNCTION</scope>
    <scope>SUBUNIT</scope>
</reference>
<reference key="7">
    <citation type="journal article" date="2008" name="Mol. Cell">
        <title>Kinase-selective enrichment enables quantitative phosphoproteomics of the kinome across the cell cycle.</title>
        <authorList>
            <person name="Daub H."/>
            <person name="Olsen J.V."/>
            <person name="Bairlein M."/>
            <person name="Gnad F."/>
            <person name="Oppermann F.S."/>
            <person name="Korner R."/>
            <person name="Greff Z."/>
            <person name="Keri G."/>
            <person name="Stemmann O."/>
            <person name="Mann M."/>
        </authorList>
    </citation>
    <scope>IDENTIFICATION BY MASS SPECTROMETRY [LARGE SCALE ANALYSIS]</scope>
    <source>
        <tissue>Cervix carcinoma</tissue>
    </source>
</reference>
<reference key="8">
    <citation type="journal article" date="2009" name="Mol. Cell. Proteomics">
        <title>Large-scale proteomics analysis of the human kinome.</title>
        <authorList>
            <person name="Oppermann F.S."/>
            <person name="Gnad F."/>
            <person name="Olsen J.V."/>
            <person name="Hornberger R."/>
            <person name="Greff Z."/>
            <person name="Keri G."/>
            <person name="Mann M."/>
            <person name="Daub H."/>
        </authorList>
    </citation>
    <scope>IDENTIFICATION BY MASS SPECTROMETRY [LARGE SCALE ANALYSIS]</scope>
</reference>
<reference key="9">
    <citation type="journal article" date="2009" name="Science">
        <title>Lysine acetylation targets protein complexes and co-regulates major cellular functions.</title>
        <authorList>
            <person name="Choudhary C."/>
            <person name="Kumar C."/>
            <person name="Gnad F."/>
            <person name="Nielsen M.L."/>
            <person name="Rehman M."/>
            <person name="Walther T.C."/>
            <person name="Olsen J.V."/>
            <person name="Mann M."/>
        </authorList>
    </citation>
    <scope>ACETYLATION [LARGE SCALE ANALYSIS] AT LYS-36</scope>
    <scope>IDENTIFICATION BY MASS SPECTROMETRY [LARGE SCALE ANALYSIS]</scope>
</reference>
<reference key="10">
    <citation type="journal article" date="2010" name="Sci. Signal.">
        <title>Quantitative phosphoproteomics reveals widespread full phosphorylation site occupancy during mitosis.</title>
        <authorList>
            <person name="Olsen J.V."/>
            <person name="Vermeulen M."/>
            <person name="Santamaria A."/>
            <person name="Kumar C."/>
            <person name="Miller M.L."/>
            <person name="Jensen L.J."/>
            <person name="Gnad F."/>
            <person name="Cox J."/>
            <person name="Jensen T.S."/>
            <person name="Nigg E.A."/>
            <person name="Brunak S."/>
            <person name="Mann M."/>
        </authorList>
    </citation>
    <scope>PHOSPHORYLATION [LARGE SCALE ANALYSIS] AT SER-12</scope>
    <scope>IDENTIFICATION BY MASS SPECTROMETRY [LARGE SCALE ANALYSIS]</scope>
    <source>
        <tissue>Cervix carcinoma</tissue>
    </source>
</reference>
<reference key="11">
    <citation type="journal article" date="2011" name="BMC Syst. Biol.">
        <title>Initial characterization of the human central proteome.</title>
        <authorList>
            <person name="Burkard T.R."/>
            <person name="Planyavsky M."/>
            <person name="Kaupe I."/>
            <person name="Breitwieser F.P."/>
            <person name="Buerckstuemmer T."/>
            <person name="Bennett K.L."/>
            <person name="Superti-Furga G."/>
            <person name="Colinge J."/>
        </authorList>
    </citation>
    <scope>IDENTIFICATION BY MASS SPECTROMETRY [LARGE SCALE ANALYSIS]</scope>
</reference>
<reference key="12">
    <citation type="journal article" date="2011" name="Sci. Signal.">
        <title>System-wide temporal characterization of the proteome and phosphoproteome of human embryonic stem cell differentiation.</title>
        <authorList>
            <person name="Rigbolt K.T."/>
            <person name="Prokhorova T.A."/>
            <person name="Akimov V."/>
            <person name="Henningsen J."/>
            <person name="Johansen P.T."/>
            <person name="Kratchmarova I."/>
            <person name="Kassem M."/>
            <person name="Mann M."/>
            <person name="Olsen J.V."/>
            <person name="Blagoev B."/>
        </authorList>
    </citation>
    <scope>PHOSPHORYLATION [LARGE SCALE ANALYSIS] AT SER-12</scope>
    <scope>IDENTIFICATION BY MASS SPECTROMETRY [LARGE SCALE ANALYSIS]</scope>
</reference>
<reference key="13">
    <citation type="journal article" date="2014" name="Curr. Opin. Struct. Biol.">
        <title>A new system for naming ribosomal proteins.</title>
        <authorList>
            <person name="Ban N."/>
            <person name="Beckmann R."/>
            <person name="Cate J.H.D."/>
            <person name="Dinman J.D."/>
            <person name="Dragon F."/>
            <person name="Ellis S.R."/>
            <person name="Lafontaine D.L.J."/>
            <person name="Lindahl L."/>
            <person name="Liljas A."/>
            <person name="Lipton J.M."/>
            <person name="McAlear M.A."/>
            <person name="Moore P.B."/>
            <person name="Noller H.F."/>
            <person name="Ortega J."/>
            <person name="Panse V.G."/>
            <person name="Ramakrishnan V."/>
            <person name="Spahn C.M.T."/>
            <person name="Steitz T.A."/>
            <person name="Tchorzewski M."/>
            <person name="Tollervey D."/>
            <person name="Warren A.J."/>
            <person name="Williamson J.R."/>
            <person name="Wilson D."/>
            <person name="Yonath A."/>
            <person name="Yusupov M."/>
        </authorList>
    </citation>
    <scope>NOMENCLATURE</scope>
</reference>
<reference key="14">
    <citation type="journal article" date="2014" name="J. Proteomics">
        <title>An enzyme assisted RP-RPLC approach for in-depth analysis of human liver phosphoproteome.</title>
        <authorList>
            <person name="Bian Y."/>
            <person name="Song C."/>
            <person name="Cheng K."/>
            <person name="Dong M."/>
            <person name="Wang F."/>
            <person name="Huang J."/>
            <person name="Sun D."/>
            <person name="Wang L."/>
            <person name="Ye M."/>
            <person name="Zou H."/>
        </authorList>
    </citation>
    <scope>IDENTIFICATION BY MASS SPECTROMETRY [LARGE SCALE ANALYSIS]</scope>
    <source>
        <tissue>Liver</tissue>
    </source>
</reference>
<reference key="15">
    <citation type="journal article" date="2015" name="Proteomics">
        <title>N-terminome analysis of the human mitochondrial proteome.</title>
        <authorList>
            <person name="Vaca Jacome A.S."/>
            <person name="Rabilloud T."/>
            <person name="Schaeffer-Reiss C."/>
            <person name="Rompais M."/>
            <person name="Ayoub D."/>
            <person name="Lane L."/>
            <person name="Bairoch A."/>
            <person name="Van Dorsselaer A."/>
            <person name="Carapito C."/>
        </authorList>
    </citation>
    <scope>IDENTIFICATION BY MASS SPECTROMETRY [LARGE SCALE ANALYSIS]</scope>
</reference>
<reference key="16">
    <citation type="journal article" date="2017" name="Nat. Struct. Mol. Biol.">
        <title>Site-specific mapping of the human SUMO proteome reveals co-modification with phosphorylation.</title>
        <authorList>
            <person name="Hendriks I.A."/>
            <person name="Lyon D."/>
            <person name="Young C."/>
            <person name="Jensen L.J."/>
            <person name="Vertegaal A.C."/>
            <person name="Nielsen M.L."/>
        </authorList>
    </citation>
    <scope>SUMOYLATION [LARGE SCALE ANALYSIS] AT LYS-108</scope>
    <scope>IDENTIFICATION BY MASS SPECTROMETRY [LARGE SCALE ANALYSIS]</scope>
</reference>
<reference key="17">
    <citation type="journal article" date="2013" name="Nature">
        <title>Structures of the human and Drosophila 80S ribosome.</title>
        <authorList>
            <person name="Anger A.M."/>
            <person name="Armache J.P."/>
            <person name="Berninghausen O."/>
            <person name="Habeck M."/>
            <person name="Subklewe M."/>
            <person name="Wilson D.N."/>
            <person name="Beckmann R."/>
        </authorList>
    </citation>
    <scope>STRUCTURE BY ELECTRON MICROSCOPY (5.0 ANGSTROMS)</scope>
    <scope>FUNCTION</scope>
    <scope>SUBCELLULAR LOCATION</scope>
    <scope>SUBUNIT</scope>
</reference>
<reference evidence="14" key="18">
    <citation type="journal article" date="2015" name="Cell">
        <title>Structural snapshots of actively translating human ribosomes.</title>
        <authorList>
            <person name="Behrmann E."/>
            <person name="Loerke J."/>
            <person name="Budkevich T.V."/>
            <person name="Yamamoto K."/>
            <person name="Schmidt A."/>
            <person name="Penczek P.A."/>
            <person name="Vos M.R."/>
            <person name="Burger J."/>
            <person name="Mielke T."/>
            <person name="Scheerer P."/>
            <person name="Spahn C.M."/>
        </authorList>
    </citation>
    <scope>STRUCTURE BY ELECTRON MICROSCOPY (3.50 ANGSTROMS)</scope>
    <scope>FUNCTION</scope>
    <scope>SUBCELLULAR LOCATION</scope>
    <scope>SUBUNIT</scope>
</reference>
<reference evidence="13" key="19">
    <citation type="journal article" date="2015" name="Nature">
        <title>Structure of the human 80S ribosome.</title>
        <authorList>
            <person name="Khatter H."/>
            <person name="Myasnikov A.G."/>
            <person name="Natchiar S.K."/>
            <person name="Klaholz B.P."/>
        </authorList>
    </citation>
    <scope>STRUCTURE BY ELECTRON MICROSCOPY (3.60 ANGSTROMS)</scope>
    <scope>FUNCTION</scope>
    <scope>SUBCELLULAR LOCATION</scope>
    <scope>SUBUNIT</scope>
</reference>
<reference evidence="15 16 17 18" key="20">
    <citation type="journal article" date="2020" name="Nat. Commun.">
        <title>Structural snapshots of human pre-60S ribosomal particles before and after nuclear export.</title>
        <authorList>
            <person name="Liang X."/>
            <person name="Zuo M.Q."/>
            <person name="Zhang Y."/>
            <person name="Li N."/>
            <person name="Ma C."/>
            <person name="Dong M.Q."/>
            <person name="Gao N."/>
        </authorList>
    </citation>
    <scope>STRUCTURE BY ELECTRON MICROSCOPY (3.09 ANGSTROMS)</scope>
    <scope>FUNCTION</scope>
    <scope>SUBUNIT</scope>
</reference>